<dbReference type="PIR" id="B61492">
    <property type="entry name" value="B61492"/>
</dbReference>
<dbReference type="SMR" id="P67940"/>
<dbReference type="GO" id="GO:0005576">
    <property type="term" value="C:extracellular region"/>
    <property type="evidence" value="ECO:0007669"/>
    <property type="project" value="UniProtKB-SubCell"/>
</dbReference>
<dbReference type="GO" id="GO:0004867">
    <property type="term" value="F:serine-type endopeptidase inhibitor activity"/>
    <property type="evidence" value="ECO:0007669"/>
    <property type="project" value="UniProtKB-KW"/>
</dbReference>
<dbReference type="CDD" id="cd00104">
    <property type="entry name" value="KAZAL_FS"/>
    <property type="match status" value="1"/>
</dbReference>
<dbReference type="FunFam" id="3.30.60.30:FF:000037">
    <property type="entry name" value="Ovomucoid"/>
    <property type="match status" value="1"/>
</dbReference>
<dbReference type="Gene3D" id="3.30.60.30">
    <property type="match status" value="1"/>
</dbReference>
<dbReference type="InterPro" id="IPR051597">
    <property type="entry name" value="Bifunctional_prot_inhibitor"/>
</dbReference>
<dbReference type="InterPro" id="IPR002350">
    <property type="entry name" value="Kazal_dom"/>
</dbReference>
<dbReference type="InterPro" id="IPR036058">
    <property type="entry name" value="Kazal_dom_sf"/>
</dbReference>
<dbReference type="InterPro" id="IPR001239">
    <property type="entry name" value="Prot_inh_Kazal-m"/>
</dbReference>
<dbReference type="PANTHER" id="PTHR47729:SF1">
    <property type="entry name" value="OVOMUCOID-LIKE-RELATED"/>
    <property type="match status" value="1"/>
</dbReference>
<dbReference type="PANTHER" id="PTHR47729">
    <property type="entry name" value="SERINE PEPTIDASE INHIBITOR, KAZAL TYPE 2, TANDEM DUPLICATE 1-RELATED"/>
    <property type="match status" value="1"/>
</dbReference>
<dbReference type="Pfam" id="PF00050">
    <property type="entry name" value="Kazal_1"/>
    <property type="match status" value="1"/>
</dbReference>
<dbReference type="PRINTS" id="PR00290">
    <property type="entry name" value="KAZALINHBTR"/>
</dbReference>
<dbReference type="SMART" id="SM00280">
    <property type="entry name" value="KAZAL"/>
    <property type="match status" value="1"/>
</dbReference>
<dbReference type="SUPFAM" id="SSF100895">
    <property type="entry name" value="Kazal-type serine protease inhibitors"/>
    <property type="match status" value="1"/>
</dbReference>
<dbReference type="PROSITE" id="PS00282">
    <property type="entry name" value="KAZAL_1"/>
    <property type="match status" value="1"/>
</dbReference>
<dbReference type="PROSITE" id="PS51465">
    <property type="entry name" value="KAZAL_2"/>
    <property type="match status" value="1"/>
</dbReference>
<name>IOVO_LEUAL</name>
<proteinExistence type="evidence at protein level"/>
<sequence>IATVDCSDYPKPVCSLEYMPLCGSDSKTYSNKCNFCNAVVDSNGTLTLSHFGKC</sequence>
<organism>
    <name type="scientific">Leucocarbo albiventer</name>
    <name type="common">King cormorant</name>
    <name type="synonym">Leucocarbo atriceps albiventer</name>
    <dbReference type="NCBI Taxonomy" id="9208"/>
    <lineage>
        <taxon>Eukaryota</taxon>
        <taxon>Metazoa</taxon>
        <taxon>Chordata</taxon>
        <taxon>Craniata</taxon>
        <taxon>Vertebrata</taxon>
        <taxon>Euteleostomi</taxon>
        <taxon>Archelosauria</taxon>
        <taxon>Archosauria</taxon>
        <taxon>Dinosauria</taxon>
        <taxon>Saurischia</taxon>
        <taxon>Theropoda</taxon>
        <taxon>Coelurosauria</taxon>
        <taxon>Aves</taxon>
        <taxon>Neognathae</taxon>
        <taxon>Neoaves</taxon>
        <taxon>Aequornithes</taxon>
        <taxon>Suliformes</taxon>
        <taxon>Phalacrocoracidae</taxon>
        <taxon>Leucocarbo</taxon>
    </lineage>
</organism>
<evidence type="ECO:0000255" key="1">
    <source>
        <dbReference type="PROSITE-ProRule" id="PRU00798"/>
    </source>
</evidence>
<protein>
    <recommendedName>
        <fullName>Ovomucoid</fullName>
    </recommendedName>
</protein>
<feature type="chain" id="PRO_0000073161" description="Ovomucoid">
    <location>
        <begin position="1" status="less than"/>
        <end position="54" status="greater than"/>
    </location>
</feature>
<feature type="domain" description="Kazal-like" evidence="1">
    <location>
        <begin position="4"/>
        <end position="54"/>
    </location>
</feature>
<feature type="site" description="Reactive bond 3">
    <location>
        <begin position="16"/>
        <end position="17"/>
    </location>
</feature>
<feature type="glycosylation site" description="N-linked (GlcNAc...) asparagine">
    <location>
        <position position="43"/>
    </location>
</feature>
<feature type="disulfide bond">
    <location>
        <begin position="6"/>
        <end position="36"/>
    </location>
</feature>
<feature type="disulfide bond">
    <location>
        <begin position="14"/>
        <end position="33"/>
    </location>
</feature>
<feature type="disulfide bond">
    <location>
        <begin position="22"/>
        <end position="54"/>
    </location>
</feature>
<feature type="non-terminal residue">
    <location>
        <position position="1"/>
    </location>
</feature>
<feature type="non-terminal residue">
    <location>
        <position position="54"/>
    </location>
</feature>
<reference key="1">
    <citation type="journal article" date="1990" name="J. Protein Chem.">
        <title>Amino acid sequences of ovomucoid third domain from 25 additional species of birds.</title>
        <authorList>
            <person name="Laskowski M. Jr."/>
            <person name="Apostol I."/>
            <person name="Ardelt W."/>
            <person name="Cook J."/>
            <person name="Giletto A."/>
            <person name="Kelly C.A."/>
            <person name="Lu W."/>
            <person name="Park S.J."/>
            <person name="Qasim M.A."/>
            <person name="Whatley H.E."/>
            <person name="Wieczorek A."/>
            <person name="Wynn R."/>
        </authorList>
    </citation>
    <scope>PROTEIN SEQUENCE</scope>
</reference>
<comment type="subcellular location">
    <subcellularLocation>
        <location>Secreted</location>
    </subcellularLocation>
</comment>
<comment type="domain">
    <text>Avian ovomucoid consists of three homologous, tandem Kazal family inhibitory domains.</text>
</comment>
<accession>P67940</accession>
<accession>P52257</accession>
<keyword id="KW-0903">Direct protein sequencing</keyword>
<keyword id="KW-1015">Disulfide bond</keyword>
<keyword id="KW-0325">Glycoprotein</keyword>
<keyword id="KW-0646">Protease inhibitor</keyword>
<keyword id="KW-0677">Repeat</keyword>
<keyword id="KW-0964">Secreted</keyword>
<keyword id="KW-0722">Serine protease inhibitor</keyword>